<evidence type="ECO:0000255" key="1">
    <source>
        <dbReference type="PROSITE-ProRule" id="PRU00034"/>
    </source>
</evidence>
<evidence type="ECO:0000256" key="2">
    <source>
        <dbReference type="SAM" id="MobiDB-lite"/>
    </source>
</evidence>
<evidence type="ECO:0000269" key="3">
    <source>
    </source>
</evidence>
<evidence type="ECO:0000269" key="4">
    <source>
    </source>
</evidence>
<evidence type="ECO:0000269" key="5">
    <source>
    </source>
</evidence>
<evidence type="ECO:0000269" key="6">
    <source>
    </source>
</evidence>
<evidence type="ECO:0000305" key="7"/>
<organism>
    <name type="scientific">Homo sapiens</name>
    <name type="common">Human</name>
    <dbReference type="NCBI Taxonomy" id="9606"/>
    <lineage>
        <taxon>Eukaryota</taxon>
        <taxon>Metazoa</taxon>
        <taxon>Chordata</taxon>
        <taxon>Craniata</taxon>
        <taxon>Vertebrata</taxon>
        <taxon>Euteleostomi</taxon>
        <taxon>Mammalia</taxon>
        <taxon>Eutheria</taxon>
        <taxon>Euarchontoglires</taxon>
        <taxon>Primates</taxon>
        <taxon>Haplorrhini</taxon>
        <taxon>Catarrhini</taxon>
        <taxon>Hominidae</taxon>
        <taxon>Homo</taxon>
    </lineage>
</organism>
<name>RPF2_HUMAN</name>
<comment type="function">
    <text evidence="5">Involved in ribosomal large subunit assembly. May regulate the localization of the 5S RNP/5S ribonucleoprotein particle to the nucleolus.</text>
</comment>
<comment type="subunit">
    <text evidence="6">Component of a hexameric 5S RNP precursor complex, composed of 5S RNA, RRS1, RPF2/BXDC1, RPL5, RPL11 and HEATR3; this complex acts as a precursor for ribosome assembly.</text>
</comment>
<comment type="interaction">
    <interactant intactId="EBI-1051960">
        <id>Q9H7B2</id>
    </interactant>
    <interactant intactId="EBI-80426">
        <id>Q15700</id>
        <label>DLG2</label>
    </interactant>
    <organismsDiffer>false</organismsDiffer>
    <experiments>3</experiments>
</comment>
<comment type="interaction">
    <interactant intactId="EBI-1051960">
        <id>Q9H7B2</id>
    </interactant>
    <interactant intactId="EBI-749186">
        <id>Q15050</id>
        <label>RRS1</label>
    </interactant>
    <organismsDiffer>false</organismsDiffer>
    <experiments>3</experiments>
</comment>
<comment type="subcellular location">
    <subcellularLocation>
        <location evidence="3 4">Nucleus</location>
        <location evidence="3 4">Nucleolus</location>
    </subcellularLocation>
    <text>Associated with the nucleolus in an RNA-dependent manner.</text>
</comment>
<comment type="similarity">
    <text evidence="7">Belongs to the RPF2 family.</text>
</comment>
<dbReference type="EMBL" id="AL357515">
    <property type="status" value="NOT_ANNOTATED_CDS"/>
    <property type="molecule type" value="Genomic_DNA"/>
</dbReference>
<dbReference type="EMBL" id="CH471051">
    <property type="protein sequence ID" value="EAW48303.1"/>
    <property type="molecule type" value="Genomic_DNA"/>
</dbReference>
<dbReference type="EMBL" id="BC035314">
    <property type="protein sequence ID" value="AAH35314.1"/>
    <property type="molecule type" value="mRNA"/>
</dbReference>
<dbReference type="EMBL" id="AK024740">
    <property type="protein sequence ID" value="BAB14983.1"/>
    <property type="molecule type" value="mRNA"/>
</dbReference>
<dbReference type="CCDS" id="CCDS5088.1"/>
<dbReference type="RefSeq" id="NP_115570.1">
    <property type="nucleotide sequence ID" value="NM_032194.3"/>
</dbReference>
<dbReference type="PDB" id="8FL0">
    <property type="method" value="EM"/>
    <property type="resolution" value="2.91 A"/>
    <property type="chains" value="ND=1-306"/>
</dbReference>
<dbReference type="PDB" id="8IR1">
    <property type="method" value="EM"/>
    <property type="resolution" value="3.30 A"/>
    <property type="chains" value="T=1-306"/>
</dbReference>
<dbReference type="PDB" id="8IR3">
    <property type="method" value="EM"/>
    <property type="resolution" value="3.50 A"/>
    <property type="chains" value="T=1-306"/>
</dbReference>
<dbReference type="PDB" id="8RL2">
    <property type="method" value="EM"/>
    <property type="resolution" value="2.84 A"/>
    <property type="chains" value="CJ=1-306"/>
</dbReference>
<dbReference type="PDBsum" id="8FL0"/>
<dbReference type="PDBsum" id="8IR1"/>
<dbReference type="PDBsum" id="8IR3"/>
<dbReference type="PDBsum" id="8RL2"/>
<dbReference type="EMDB" id="EMD-19330"/>
<dbReference type="EMDB" id="EMD-29263"/>
<dbReference type="EMDB" id="EMD-35672"/>
<dbReference type="EMDB" id="EMD-35673"/>
<dbReference type="SMR" id="Q9H7B2"/>
<dbReference type="BioGRID" id="123917">
    <property type="interactions" value="304"/>
</dbReference>
<dbReference type="FunCoup" id="Q9H7B2">
    <property type="interactions" value="3054"/>
</dbReference>
<dbReference type="IntAct" id="Q9H7B2">
    <property type="interactions" value="139"/>
</dbReference>
<dbReference type="MINT" id="Q9H7B2"/>
<dbReference type="STRING" id="9606.ENSP00000402338"/>
<dbReference type="GlyGen" id="Q9H7B2">
    <property type="glycosylation" value="1 site, 1 O-linked glycan (1 site)"/>
</dbReference>
<dbReference type="iPTMnet" id="Q9H7B2"/>
<dbReference type="PhosphoSitePlus" id="Q9H7B2"/>
<dbReference type="SwissPalm" id="Q9H7B2"/>
<dbReference type="BioMuta" id="RPF2"/>
<dbReference type="DMDM" id="30581070"/>
<dbReference type="jPOST" id="Q9H7B2"/>
<dbReference type="MassIVE" id="Q9H7B2"/>
<dbReference type="PaxDb" id="9606-ENSP00000402338"/>
<dbReference type="PeptideAtlas" id="Q9H7B2"/>
<dbReference type="ProteomicsDB" id="81095"/>
<dbReference type="Pumba" id="Q9H7B2"/>
<dbReference type="Antibodypedia" id="19293">
    <property type="antibodies" value="168 antibodies from 26 providers"/>
</dbReference>
<dbReference type="DNASU" id="84154"/>
<dbReference type="Ensembl" id="ENST00000441448.7">
    <property type="protein sequence ID" value="ENSP00000402338.2"/>
    <property type="gene ID" value="ENSG00000197498.13"/>
</dbReference>
<dbReference type="GeneID" id="84154"/>
<dbReference type="KEGG" id="hsa:84154"/>
<dbReference type="MANE-Select" id="ENST00000441448.7">
    <property type="protein sequence ID" value="ENSP00000402338.2"/>
    <property type="RefSeq nucleotide sequence ID" value="NM_032194.3"/>
    <property type="RefSeq protein sequence ID" value="NP_115570.1"/>
</dbReference>
<dbReference type="UCSC" id="uc003pun.5">
    <property type="organism name" value="human"/>
</dbReference>
<dbReference type="AGR" id="HGNC:20870"/>
<dbReference type="CTD" id="84154"/>
<dbReference type="DisGeNET" id="84154"/>
<dbReference type="GeneCards" id="RPF2"/>
<dbReference type="HGNC" id="HGNC:20870">
    <property type="gene designation" value="RPF2"/>
</dbReference>
<dbReference type="HPA" id="ENSG00000197498">
    <property type="expression patterns" value="Low tissue specificity"/>
</dbReference>
<dbReference type="MIM" id="618471">
    <property type="type" value="gene"/>
</dbReference>
<dbReference type="neXtProt" id="NX_Q9H7B2"/>
<dbReference type="OpenTargets" id="ENSG00000197498"/>
<dbReference type="PharmGKB" id="PA165618192"/>
<dbReference type="VEuPathDB" id="HostDB:ENSG00000197498"/>
<dbReference type="eggNOG" id="KOG3031">
    <property type="taxonomic scope" value="Eukaryota"/>
</dbReference>
<dbReference type="GeneTree" id="ENSGT00390000007279"/>
<dbReference type="InParanoid" id="Q9H7B2"/>
<dbReference type="OMA" id="VGLKPMF"/>
<dbReference type="OrthoDB" id="407658at2759"/>
<dbReference type="PAN-GO" id="Q9H7B2">
    <property type="GO annotations" value="4 GO annotations based on evolutionary models"/>
</dbReference>
<dbReference type="PhylomeDB" id="Q9H7B2"/>
<dbReference type="TreeFam" id="TF314371"/>
<dbReference type="PathwayCommons" id="Q9H7B2"/>
<dbReference type="SignaLink" id="Q9H7B2"/>
<dbReference type="BioGRID-ORCS" id="84154">
    <property type="hits" value="778 hits in 1163 CRISPR screens"/>
</dbReference>
<dbReference type="CD-CODE" id="232F8A39">
    <property type="entry name" value="P-body"/>
</dbReference>
<dbReference type="CD-CODE" id="91857CE7">
    <property type="entry name" value="Nucleolus"/>
</dbReference>
<dbReference type="ChiTaRS" id="RPF2">
    <property type="organism name" value="human"/>
</dbReference>
<dbReference type="GenomeRNAi" id="84154"/>
<dbReference type="Pharos" id="Q9H7B2">
    <property type="development level" value="Tbio"/>
</dbReference>
<dbReference type="PRO" id="PR:Q9H7B2"/>
<dbReference type="Proteomes" id="UP000005640">
    <property type="component" value="Chromosome 6"/>
</dbReference>
<dbReference type="RNAct" id="Q9H7B2">
    <property type="molecule type" value="protein"/>
</dbReference>
<dbReference type="Bgee" id="ENSG00000197498">
    <property type="expression patterns" value="Expressed in tibialis anterior and 191 other cell types or tissues"/>
</dbReference>
<dbReference type="ExpressionAtlas" id="Q9H7B2">
    <property type="expression patterns" value="baseline and differential"/>
</dbReference>
<dbReference type="GO" id="GO:0005694">
    <property type="term" value="C:chromosome"/>
    <property type="evidence" value="ECO:0000314"/>
    <property type="project" value="HPA"/>
</dbReference>
<dbReference type="GO" id="GO:0005730">
    <property type="term" value="C:nucleolus"/>
    <property type="evidence" value="ECO:0000314"/>
    <property type="project" value="HPA"/>
</dbReference>
<dbReference type="GO" id="GO:0005654">
    <property type="term" value="C:nucleoplasm"/>
    <property type="evidence" value="ECO:0000314"/>
    <property type="project" value="HPA"/>
</dbReference>
<dbReference type="GO" id="GO:0008097">
    <property type="term" value="F:5S rRNA binding"/>
    <property type="evidence" value="ECO:0000314"/>
    <property type="project" value="UniProtKB"/>
</dbReference>
<dbReference type="GO" id="GO:0003723">
    <property type="term" value="F:RNA binding"/>
    <property type="evidence" value="ECO:0007005"/>
    <property type="project" value="UniProtKB"/>
</dbReference>
<dbReference type="GO" id="GO:0019843">
    <property type="term" value="F:rRNA binding"/>
    <property type="evidence" value="ECO:0000318"/>
    <property type="project" value="GO_Central"/>
</dbReference>
<dbReference type="GO" id="GO:0000463">
    <property type="term" value="P:maturation of LSU-rRNA from tricistronic rRNA transcript (SSU-rRNA, 5.8S rRNA, LSU-rRNA)"/>
    <property type="evidence" value="ECO:0000318"/>
    <property type="project" value="GO_Central"/>
</dbReference>
<dbReference type="GO" id="GO:1902570">
    <property type="term" value="P:protein localization to nucleolus"/>
    <property type="evidence" value="ECO:0000315"/>
    <property type="project" value="UniProtKB"/>
</dbReference>
<dbReference type="GO" id="GO:1901796">
    <property type="term" value="P:regulation of signal transduction by p53 class mediator"/>
    <property type="evidence" value="ECO:0000315"/>
    <property type="project" value="UniProtKB"/>
</dbReference>
<dbReference type="GO" id="GO:0000027">
    <property type="term" value="P:ribosomal large subunit assembly"/>
    <property type="evidence" value="ECO:0007669"/>
    <property type="project" value="InterPro"/>
</dbReference>
<dbReference type="GO" id="GO:0042273">
    <property type="term" value="P:ribosomal large subunit biogenesis"/>
    <property type="evidence" value="ECO:0000315"/>
    <property type="project" value="UniProtKB"/>
</dbReference>
<dbReference type="InterPro" id="IPR007109">
    <property type="entry name" value="Brix"/>
</dbReference>
<dbReference type="InterPro" id="IPR039770">
    <property type="entry name" value="Rpf2"/>
</dbReference>
<dbReference type="PANTHER" id="PTHR12728">
    <property type="entry name" value="BRIX DOMAIN CONTAINING PROTEIN"/>
    <property type="match status" value="1"/>
</dbReference>
<dbReference type="PANTHER" id="PTHR12728:SF0">
    <property type="entry name" value="RIBOSOME PRODUCTION FACTOR 2 HOMOLOG"/>
    <property type="match status" value="1"/>
</dbReference>
<dbReference type="Pfam" id="PF04427">
    <property type="entry name" value="Brix"/>
    <property type="match status" value="1"/>
</dbReference>
<dbReference type="SMART" id="SM00879">
    <property type="entry name" value="Brix"/>
    <property type="match status" value="1"/>
</dbReference>
<dbReference type="PROSITE" id="PS50833">
    <property type="entry name" value="BRIX"/>
    <property type="match status" value="1"/>
</dbReference>
<protein>
    <recommendedName>
        <fullName>Ribosome production factor 2 homolog</fullName>
    </recommendedName>
    <alternativeName>
        <fullName>Brix domain-containing protein 1</fullName>
    </alternativeName>
    <alternativeName>
        <fullName>Ribosome biogenesis protein RPF2 homolog</fullName>
    </alternativeName>
</protein>
<gene>
    <name type="primary">RPF2</name>
    <name type="synonym">BXDC1</name>
</gene>
<accession>Q9H7B2</accession>
<accession>Q5VXN1</accession>
<accession>Q8N4A1</accession>
<proteinExistence type="evidence at protein level"/>
<feature type="chain" id="PRO_0000120223" description="Ribosome production factor 2 homolog">
    <location>
        <begin position="1"/>
        <end position="306"/>
    </location>
</feature>
<feature type="domain" description="Brix" evidence="1">
    <location>
        <begin position="31"/>
        <end position="234"/>
    </location>
</feature>
<feature type="region of interest" description="Disordered" evidence="2">
    <location>
        <begin position="270"/>
        <end position="306"/>
    </location>
</feature>
<feature type="compositionally biased region" description="Basic residues" evidence="2">
    <location>
        <begin position="277"/>
        <end position="286"/>
    </location>
</feature>
<feature type="compositionally biased region" description="Basic and acidic residues" evidence="2">
    <location>
        <begin position="287"/>
        <end position="298"/>
    </location>
</feature>
<feature type="sequence variant" id="VAR_033639" description="In dbSNP:rs9320350.">
    <original>A</original>
    <variation>G</variation>
    <location>
        <position position="41"/>
    </location>
</feature>
<feature type="sequence variant" id="VAR_033640" description="In dbSNP:rs6909298.">
    <original>G</original>
    <variation>S</variation>
    <location>
        <position position="60"/>
    </location>
</feature>
<feature type="sequence conflict" description="In Ref. 4; BAB14983." evidence="7" ref="4">
    <original>N</original>
    <variation>K</variation>
    <location>
        <position position="253"/>
    </location>
</feature>
<reference key="1">
    <citation type="journal article" date="2003" name="Nature">
        <title>The DNA sequence and analysis of human chromosome 6.</title>
        <authorList>
            <person name="Mungall A.J."/>
            <person name="Palmer S.A."/>
            <person name="Sims S.K."/>
            <person name="Edwards C.A."/>
            <person name="Ashurst J.L."/>
            <person name="Wilming L."/>
            <person name="Jones M.C."/>
            <person name="Horton R."/>
            <person name="Hunt S.E."/>
            <person name="Scott C.E."/>
            <person name="Gilbert J.G.R."/>
            <person name="Clamp M.E."/>
            <person name="Bethel G."/>
            <person name="Milne S."/>
            <person name="Ainscough R."/>
            <person name="Almeida J.P."/>
            <person name="Ambrose K.D."/>
            <person name="Andrews T.D."/>
            <person name="Ashwell R.I.S."/>
            <person name="Babbage A.K."/>
            <person name="Bagguley C.L."/>
            <person name="Bailey J."/>
            <person name="Banerjee R."/>
            <person name="Barker D.J."/>
            <person name="Barlow K.F."/>
            <person name="Bates K."/>
            <person name="Beare D.M."/>
            <person name="Beasley H."/>
            <person name="Beasley O."/>
            <person name="Bird C.P."/>
            <person name="Blakey S.E."/>
            <person name="Bray-Allen S."/>
            <person name="Brook J."/>
            <person name="Brown A.J."/>
            <person name="Brown J.Y."/>
            <person name="Burford D.C."/>
            <person name="Burrill W."/>
            <person name="Burton J."/>
            <person name="Carder C."/>
            <person name="Carter N.P."/>
            <person name="Chapman J.C."/>
            <person name="Clark S.Y."/>
            <person name="Clark G."/>
            <person name="Clee C.M."/>
            <person name="Clegg S."/>
            <person name="Cobley V."/>
            <person name="Collier R.E."/>
            <person name="Collins J.E."/>
            <person name="Colman L.K."/>
            <person name="Corby N.R."/>
            <person name="Coville G.J."/>
            <person name="Culley K.M."/>
            <person name="Dhami P."/>
            <person name="Davies J."/>
            <person name="Dunn M."/>
            <person name="Earthrowl M.E."/>
            <person name="Ellington A.E."/>
            <person name="Evans K.A."/>
            <person name="Faulkner L."/>
            <person name="Francis M.D."/>
            <person name="Frankish A."/>
            <person name="Frankland J."/>
            <person name="French L."/>
            <person name="Garner P."/>
            <person name="Garnett J."/>
            <person name="Ghori M.J."/>
            <person name="Gilby L.M."/>
            <person name="Gillson C.J."/>
            <person name="Glithero R.J."/>
            <person name="Grafham D.V."/>
            <person name="Grant M."/>
            <person name="Gribble S."/>
            <person name="Griffiths C."/>
            <person name="Griffiths M.N.D."/>
            <person name="Hall R."/>
            <person name="Halls K.S."/>
            <person name="Hammond S."/>
            <person name="Harley J.L."/>
            <person name="Hart E.A."/>
            <person name="Heath P.D."/>
            <person name="Heathcott R."/>
            <person name="Holmes S.J."/>
            <person name="Howden P.J."/>
            <person name="Howe K.L."/>
            <person name="Howell G.R."/>
            <person name="Huckle E."/>
            <person name="Humphray S.J."/>
            <person name="Humphries M.D."/>
            <person name="Hunt A.R."/>
            <person name="Johnson C.M."/>
            <person name="Joy A.A."/>
            <person name="Kay M."/>
            <person name="Keenan S.J."/>
            <person name="Kimberley A.M."/>
            <person name="King A."/>
            <person name="Laird G.K."/>
            <person name="Langford C."/>
            <person name="Lawlor S."/>
            <person name="Leongamornlert D.A."/>
            <person name="Leversha M."/>
            <person name="Lloyd C.R."/>
            <person name="Lloyd D.M."/>
            <person name="Loveland J.E."/>
            <person name="Lovell J."/>
            <person name="Martin S."/>
            <person name="Mashreghi-Mohammadi M."/>
            <person name="Maslen G.L."/>
            <person name="Matthews L."/>
            <person name="McCann O.T."/>
            <person name="McLaren S.J."/>
            <person name="McLay K."/>
            <person name="McMurray A."/>
            <person name="Moore M.J.F."/>
            <person name="Mullikin J.C."/>
            <person name="Niblett D."/>
            <person name="Nickerson T."/>
            <person name="Novik K.L."/>
            <person name="Oliver K."/>
            <person name="Overton-Larty E.K."/>
            <person name="Parker A."/>
            <person name="Patel R."/>
            <person name="Pearce A.V."/>
            <person name="Peck A.I."/>
            <person name="Phillimore B.J.C.T."/>
            <person name="Phillips S."/>
            <person name="Plumb R.W."/>
            <person name="Porter K.M."/>
            <person name="Ramsey Y."/>
            <person name="Ranby S.A."/>
            <person name="Rice C.M."/>
            <person name="Ross M.T."/>
            <person name="Searle S.M."/>
            <person name="Sehra H.K."/>
            <person name="Sheridan E."/>
            <person name="Skuce C.D."/>
            <person name="Smith S."/>
            <person name="Smith M."/>
            <person name="Spraggon L."/>
            <person name="Squares S.L."/>
            <person name="Steward C.A."/>
            <person name="Sycamore N."/>
            <person name="Tamlyn-Hall G."/>
            <person name="Tester J."/>
            <person name="Theaker A.J."/>
            <person name="Thomas D.W."/>
            <person name="Thorpe A."/>
            <person name="Tracey A."/>
            <person name="Tromans A."/>
            <person name="Tubby B."/>
            <person name="Wall M."/>
            <person name="Wallis J.M."/>
            <person name="West A.P."/>
            <person name="White S.S."/>
            <person name="Whitehead S.L."/>
            <person name="Whittaker H."/>
            <person name="Wild A."/>
            <person name="Willey D.J."/>
            <person name="Wilmer T.E."/>
            <person name="Wood J.M."/>
            <person name="Wray P.W."/>
            <person name="Wyatt J.C."/>
            <person name="Young L."/>
            <person name="Younger R.M."/>
            <person name="Bentley D.R."/>
            <person name="Coulson A."/>
            <person name="Durbin R.M."/>
            <person name="Hubbard T."/>
            <person name="Sulston J.E."/>
            <person name="Dunham I."/>
            <person name="Rogers J."/>
            <person name="Beck S."/>
        </authorList>
    </citation>
    <scope>NUCLEOTIDE SEQUENCE [LARGE SCALE GENOMIC DNA]</scope>
</reference>
<reference key="2">
    <citation type="submission" date="2005-09" db="EMBL/GenBank/DDBJ databases">
        <authorList>
            <person name="Mural R.J."/>
            <person name="Istrail S."/>
            <person name="Sutton G.G."/>
            <person name="Florea L."/>
            <person name="Halpern A.L."/>
            <person name="Mobarry C.M."/>
            <person name="Lippert R."/>
            <person name="Walenz B."/>
            <person name="Shatkay H."/>
            <person name="Dew I."/>
            <person name="Miller J.R."/>
            <person name="Flanigan M.J."/>
            <person name="Edwards N.J."/>
            <person name="Bolanos R."/>
            <person name="Fasulo D."/>
            <person name="Halldorsson B.V."/>
            <person name="Hannenhalli S."/>
            <person name="Turner R."/>
            <person name="Yooseph S."/>
            <person name="Lu F."/>
            <person name="Nusskern D.R."/>
            <person name="Shue B.C."/>
            <person name="Zheng X.H."/>
            <person name="Zhong F."/>
            <person name="Delcher A.L."/>
            <person name="Huson D.H."/>
            <person name="Kravitz S.A."/>
            <person name="Mouchard L."/>
            <person name="Reinert K."/>
            <person name="Remington K.A."/>
            <person name="Clark A.G."/>
            <person name="Waterman M.S."/>
            <person name="Eichler E.E."/>
            <person name="Adams M.D."/>
            <person name="Hunkapiller M.W."/>
            <person name="Myers E.W."/>
            <person name="Venter J.C."/>
        </authorList>
    </citation>
    <scope>NUCLEOTIDE SEQUENCE [LARGE SCALE GENOMIC DNA]</scope>
</reference>
<reference key="3">
    <citation type="journal article" date="2004" name="Genome Res.">
        <title>The status, quality, and expansion of the NIH full-length cDNA project: the Mammalian Gene Collection (MGC).</title>
        <authorList>
            <consortium name="The MGC Project Team"/>
        </authorList>
    </citation>
    <scope>NUCLEOTIDE SEQUENCE [LARGE SCALE MRNA]</scope>
    <source>
        <tissue>Skin</tissue>
    </source>
</reference>
<reference key="4">
    <citation type="journal article" date="2004" name="Nat. Genet.">
        <title>Complete sequencing and characterization of 21,243 full-length human cDNAs.</title>
        <authorList>
            <person name="Ota T."/>
            <person name="Suzuki Y."/>
            <person name="Nishikawa T."/>
            <person name="Otsuki T."/>
            <person name="Sugiyama T."/>
            <person name="Irie R."/>
            <person name="Wakamatsu A."/>
            <person name="Hayashi K."/>
            <person name="Sato H."/>
            <person name="Nagai K."/>
            <person name="Kimura K."/>
            <person name="Makita H."/>
            <person name="Sekine M."/>
            <person name="Obayashi M."/>
            <person name="Nishi T."/>
            <person name="Shibahara T."/>
            <person name="Tanaka T."/>
            <person name="Ishii S."/>
            <person name="Yamamoto J."/>
            <person name="Saito K."/>
            <person name="Kawai Y."/>
            <person name="Isono Y."/>
            <person name="Nakamura Y."/>
            <person name="Nagahari K."/>
            <person name="Murakami K."/>
            <person name="Yasuda T."/>
            <person name="Iwayanagi T."/>
            <person name="Wagatsuma M."/>
            <person name="Shiratori A."/>
            <person name="Sudo H."/>
            <person name="Hosoiri T."/>
            <person name="Kaku Y."/>
            <person name="Kodaira H."/>
            <person name="Kondo H."/>
            <person name="Sugawara M."/>
            <person name="Takahashi M."/>
            <person name="Kanda K."/>
            <person name="Yokoi T."/>
            <person name="Furuya T."/>
            <person name="Kikkawa E."/>
            <person name="Omura Y."/>
            <person name="Abe K."/>
            <person name="Kamihara K."/>
            <person name="Katsuta N."/>
            <person name="Sato K."/>
            <person name="Tanikawa M."/>
            <person name="Yamazaki M."/>
            <person name="Ninomiya K."/>
            <person name="Ishibashi T."/>
            <person name="Yamashita H."/>
            <person name="Murakawa K."/>
            <person name="Fujimori K."/>
            <person name="Tanai H."/>
            <person name="Kimata M."/>
            <person name="Watanabe M."/>
            <person name="Hiraoka S."/>
            <person name="Chiba Y."/>
            <person name="Ishida S."/>
            <person name="Ono Y."/>
            <person name="Takiguchi S."/>
            <person name="Watanabe S."/>
            <person name="Yosida M."/>
            <person name="Hotuta T."/>
            <person name="Kusano J."/>
            <person name="Kanehori K."/>
            <person name="Takahashi-Fujii A."/>
            <person name="Hara H."/>
            <person name="Tanase T.-O."/>
            <person name="Nomura Y."/>
            <person name="Togiya S."/>
            <person name="Komai F."/>
            <person name="Hara R."/>
            <person name="Takeuchi K."/>
            <person name="Arita M."/>
            <person name="Imose N."/>
            <person name="Musashino K."/>
            <person name="Yuuki H."/>
            <person name="Oshima A."/>
            <person name="Sasaki N."/>
            <person name="Aotsuka S."/>
            <person name="Yoshikawa Y."/>
            <person name="Matsunawa H."/>
            <person name="Ichihara T."/>
            <person name="Shiohata N."/>
            <person name="Sano S."/>
            <person name="Moriya S."/>
            <person name="Momiyama H."/>
            <person name="Satoh N."/>
            <person name="Takami S."/>
            <person name="Terashima Y."/>
            <person name="Suzuki O."/>
            <person name="Nakagawa S."/>
            <person name="Senoh A."/>
            <person name="Mizoguchi H."/>
            <person name="Goto Y."/>
            <person name="Shimizu F."/>
            <person name="Wakebe H."/>
            <person name="Hishigaki H."/>
            <person name="Watanabe T."/>
            <person name="Sugiyama A."/>
            <person name="Takemoto M."/>
            <person name="Kawakami B."/>
            <person name="Yamazaki M."/>
            <person name="Watanabe K."/>
            <person name="Kumagai A."/>
            <person name="Itakura S."/>
            <person name="Fukuzumi Y."/>
            <person name="Fujimori Y."/>
            <person name="Komiyama M."/>
            <person name="Tashiro H."/>
            <person name="Tanigami A."/>
            <person name="Fujiwara T."/>
            <person name="Ono T."/>
            <person name="Yamada K."/>
            <person name="Fujii Y."/>
            <person name="Ozaki K."/>
            <person name="Hirao M."/>
            <person name="Ohmori Y."/>
            <person name="Kawabata A."/>
            <person name="Hikiji T."/>
            <person name="Kobatake N."/>
            <person name="Inagaki H."/>
            <person name="Ikema Y."/>
            <person name="Okamoto S."/>
            <person name="Okitani R."/>
            <person name="Kawakami T."/>
            <person name="Noguchi S."/>
            <person name="Itoh T."/>
            <person name="Shigeta K."/>
            <person name="Senba T."/>
            <person name="Matsumura K."/>
            <person name="Nakajima Y."/>
            <person name="Mizuno T."/>
            <person name="Morinaga M."/>
            <person name="Sasaki M."/>
            <person name="Togashi T."/>
            <person name="Oyama M."/>
            <person name="Hata H."/>
            <person name="Watanabe M."/>
            <person name="Komatsu T."/>
            <person name="Mizushima-Sugano J."/>
            <person name="Satoh T."/>
            <person name="Shirai Y."/>
            <person name="Takahashi Y."/>
            <person name="Nakagawa K."/>
            <person name="Okumura K."/>
            <person name="Nagase T."/>
            <person name="Nomura N."/>
            <person name="Kikuchi H."/>
            <person name="Masuho Y."/>
            <person name="Yamashita R."/>
            <person name="Nakai K."/>
            <person name="Yada T."/>
            <person name="Nakamura Y."/>
            <person name="Ohara O."/>
            <person name="Isogai T."/>
            <person name="Sugano S."/>
        </authorList>
    </citation>
    <scope>NUCLEOTIDE SEQUENCE [LARGE SCALE MRNA] OF 1-253</scope>
</reference>
<reference key="5">
    <citation type="journal article" date="2002" name="Mol. Biol. Cell">
        <title>Functional proteomic analysis of human nucleolus.</title>
        <authorList>
            <person name="Scherl A."/>
            <person name="Coute Y."/>
            <person name="Deon C."/>
            <person name="Calle A."/>
            <person name="Kindbeiter K."/>
            <person name="Sanchez J.-C."/>
            <person name="Greco A."/>
            <person name="Hochstrasser D.F."/>
            <person name="Diaz J.-J."/>
        </authorList>
    </citation>
    <scope>SUBCELLULAR LOCATION [LARGE SCALE ANALYSIS]</scope>
    <source>
        <tissue>Cervix carcinoma</tissue>
    </source>
</reference>
<reference key="6">
    <citation type="journal article" date="2009" name="Genes Cells">
        <title>Proteomic and targeted analytical identification of BXDC1 and EBNA1BP2 as dynamic scaffold proteins in the nucleolus.</title>
        <authorList>
            <person name="Hirano Y."/>
            <person name="Ishii K."/>
            <person name="Kumeta M."/>
            <person name="Furukawa K."/>
            <person name="Takeyasu K."/>
            <person name="Horigome T."/>
        </authorList>
    </citation>
    <scope>SUBCELLULAR LOCATION</scope>
</reference>
<reference key="7">
    <citation type="journal article" date="2011" name="BMC Syst. Biol.">
        <title>Initial characterization of the human central proteome.</title>
        <authorList>
            <person name="Burkard T.R."/>
            <person name="Planyavsky M."/>
            <person name="Kaupe I."/>
            <person name="Breitwieser F.P."/>
            <person name="Buerckstuemmer T."/>
            <person name="Bennett K.L."/>
            <person name="Superti-Furga G."/>
            <person name="Colinge J."/>
        </authorList>
    </citation>
    <scope>IDENTIFICATION BY MASS SPECTROMETRY [LARGE SCALE ANALYSIS]</scope>
</reference>
<reference key="8">
    <citation type="journal article" date="2013" name="Cell Rep.">
        <title>The 5S RNP couples p53 homeostasis to ribosome biogenesis and nucleolar stress.</title>
        <authorList>
            <person name="Sloan K.E."/>
            <person name="Bohnsack M.T."/>
            <person name="Watkins N.J."/>
        </authorList>
    </citation>
    <scope>FUNCTION</scope>
</reference>
<reference key="9">
    <citation type="journal article" date="2023" name="Nat. Struct. Mol. Biol.">
        <title>Structure of nascent 5S RNPs at the crossroad between ribosome assembly and MDM2-p53 pathways.</title>
        <authorList>
            <person name="Castillo Duque de Estrada N.M."/>
            <person name="Thoms M."/>
            <person name="Flemming D."/>
            <person name="Hammaren H.M."/>
            <person name="Buschauer R."/>
            <person name="Ameismeier M."/>
            <person name="Bassler J."/>
            <person name="Beck M."/>
            <person name="Beckmann R."/>
            <person name="Hurt E."/>
        </authorList>
    </citation>
    <scope>SUBUNIT</scope>
</reference>
<sequence length="306" mass="35583">MDTLDRVVKPKTKRAKRFLEKREPKLNENIKNAMLIKGGNANATVTKVLKDVYALKKPYGVLYKKKNITRPFEDQTSLEFFSKKSDCSLFMFGSHNKKRPNNLVIGRMYDYHVLDMIELGIENFVSLKDIKNSKCPEGTKPMLIFAGDDFDVTEDYRRLKSLLIDFFRGPTVSNIRLAGLEYVLHFTALNGKIYFRSYKLLLKKSGCRTPRIELEEMGPSLDLVLRRTHLASDDLYKLSMKMPKALKPKKKKNISHDTFGTTYGRIHMQKQDLSKLQTRKMKGLKKRPAERITEDHEKKSKRIKKN</sequence>
<keyword id="KW-0002">3D-structure</keyword>
<keyword id="KW-0539">Nucleus</keyword>
<keyword id="KW-1267">Proteomics identification</keyword>
<keyword id="KW-1185">Reference proteome</keyword>
<keyword id="KW-0690">Ribosome biogenesis</keyword>